<comment type="function">
    <text evidence="1">Catalyzes the condensation of ATP and 5-phosphoribose 1-diphosphate to form N'-(5'-phosphoribosyl)-ATP (PR-ATP). Has a crucial role in the pathway because the rate of histidine biosynthesis seems to be controlled primarily by regulation of HisG enzymatic activity.</text>
</comment>
<comment type="catalytic activity">
    <reaction evidence="1">
        <text>1-(5-phospho-beta-D-ribosyl)-ATP + diphosphate = 5-phospho-alpha-D-ribose 1-diphosphate + ATP</text>
        <dbReference type="Rhea" id="RHEA:18473"/>
        <dbReference type="ChEBI" id="CHEBI:30616"/>
        <dbReference type="ChEBI" id="CHEBI:33019"/>
        <dbReference type="ChEBI" id="CHEBI:58017"/>
        <dbReference type="ChEBI" id="CHEBI:73183"/>
        <dbReference type="EC" id="2.4.2.17"/>
    </reaction>
</comment>
<comment type="cofactor">
    <cofactor evidence="1">
        <name>Mg(2+)</name>
        <dbReference type="ChEBI" id="CHEBI:18420"/>
    </cofactor>
</comment>
<comment type="activity regulation">
    <text evidence="1">Feedback inhibited by histidine.</text>
</comment>
<comment type="pathway">
    <text evidence="1">Amino-acid biosynthesis; L-histidine biosynthesis; L-histidine from 5-phospho-alpha-D-ribose 1-diphosphate: step 1/9.</text>
</comment>
<comment type="subunit">
    <text evidence="1">Equilibrium between an active dimeric form, an inactive hexameric form and higher aggregates. Interconversion between the various forms is largely reversible and is influenced by the natural substrates and inhibitors of the enzyme.</text>
</comment>
<comment type="subcellular location">
    <subcellularLocation>
        <location evidence="1">Cytoplasm</location>
    </subcellularLocation>
</comment>
<comment type="similarity">
    <text evidence="1">Belongs to the ATP phosphoribosyltransferase family. Long subfamily.</text>
</comment>
<accession>Q32EE8</accession>
<proteinExistence type="inferred from homology"/>
<name>HIS1_SHIDS</name>
<keyword id="KW-0028">Amino-acid biosynthesis</keyword>
<keyword id="KW-0067">ATP-binding</keyword>
<keyword id="KW-0963">Cytoplasm</keyword>
<keyword id="KW-0328">Glycosyltransferase</keyword>
<keyword id="KW-0368">Histidine biosynthesis</keyword>
<keyword id="KW-0460">Magnesium</keyword>
<keyword id="KW-0479">Metal-binding</keyword>
<keyword id="KW-0547">Nucleotide-binding</keyword>
<keyword id="KW-1185">Reference proteome</keyword>
<keyword id="KW-0808">Transferase</keyword>
<sequence length="299" mass="33381">MTDNTRLRIAMQKSGRLSDDSRELLARCGIKINLHTQRLIAMAENMPIDILRVRDDDIPGLVMDGVVDLGIIGENVLEEELLNRRAQGEDPRYFTLRRLDFGGCRLSLATPIDEAWDGPLSLNGKRIATSYPHLLKRYLDQKGISFKSCLLNGSVEVAPRAGLADAICDLVSTGATLEANGLREVEVIYRSKACLIQRDGEMEESKQQLIDKLLTRIQGVIQARESKYIMMHAPTERLDEVIALLPGAERPTILPLAGDQQRVAMHMVSSETLFWETMEKLKALGASSILVLPIEKMME</sequence>
<gene>
    <name evidence="1" type="primary">hisG</name>
    <name type="ordered locus">SDY_2222</name>
</gene>
<organism>
    <name type="scientific">Shigella dysenteriae serotype 1 (strain Sd197)</name>
    <dbReference type="NCBI Taxonomy" id="300267"/>
    <lineage>
        <taxon>Bacteria</taxon>
        <taxon>Pseudomonadati</taxon>
        <taxon>Pseudomonadota</taxon>
        <taxon>Gammaproteobacteria</taxon>
        <taxon>Enterobacterales</taxon>
        <taxon>Enterobacteriaceae</taxon>
        <taxon>Shigella</taxon>
    </lineage>
</organism>
<protein>
    <recommendedName>
        <fullName evidence="1">ATP phosphoribosyltransferase</fullName>
        <shortName evidence="1">ATP-PRT</shortName>
        <shortName evidence="1">ATP-PRTase</shortName>
        <ecNumber evidence="1">2.4.2.17</ecNumber>
    </recommendedName>
</protein>
<feature type="chain" id="PRO_1000004507" description="ATP phosphoribosyltransferase">
    <location>
        <begin position="1"/>
        <end position="299"/>
    </location>
</feature>
<dbReference type="EC" id="2.4.2.17" evidence="1"/>
<dbReference type="EMBL" id="CP000034">
    <property type="protein sequence ID" value="ABB62307.1"/>
    <property type="molecule type" value="Genomic_DNA"/>
</dbReference>
<dbReference type="RefSeq" id="WP_000131774.1">
    <property type="nucleotide sequence ID" value="NC_007606.1"/>
</dbReference>
<dbReference type="RefSeq" id="YP_403798.1">
    <property type="nucleotide sequence ID" value="NC_007606.1"/>
</dbReference>
<dbReference type="SMR" id="Q32EE8"/>
<dbReference type="STRING" id="300267.SDY_2222"/>
<dbReference type="EnsemblBacteria" id="ABB62307">
    <property type="protein sequence ID" value="ABB62307"/>
    <property type="gene ID" value="SDY_2222"/>
</dbReference>
<dbReference type="KEGG" id="sdy:SDY_2222"/>
<dbReference type="PATRIC" id="fig|300267.13.peg.2686"/>
<dbReference type="HOGENOM" id="CLU_038115_1_0_6"/>
<dbReference type="UniPathway" id="UPA00031">
    <property type="reaction ID" value="UER00006"/>
</dbReference>
<dbReference type="Proteomes" id="UP000002716">
    <property type="component" value="Chromosome"/>
</dbReference>
<dbReference type="GO" id="GO:0005737">
    <property type="term" value="C:cytoplasm"/>
    <property type="evidence" value="ECO:0007669"/>
    <property type="project" value="UniProtKB-SubCell"/>
</dbReference>
<dbReference type="GO" id="GO:0005524">
    <property type="term" value="F:ATP binding"/>
    <property type="evidence" value="ECO:0007669"/>
    <property type="project" value="UniProtKB-KW"/>
</dbReference>
<dbReference type="GO" id="GO:0003879">
    <property type="term" value="F:ATP phosphoribosyltransferase activity"/>
    <property type="evidence" value="ECO:0007669"/>
    <property type="project" value="UniProtKB-UniRule"/>
</dbReference>
<dbReference type="GO" id="GO:0000287">
    <property type="term" value="F:magnesium ion binding"/>
    <property type="evidence" value="ECO:0007669"/>
    <property type="project" value="UniProtKB-UniRule"/>
</dbReference>
<dbReference type="GO" id="GO:0000105">
    <property type="term" value="P:L-histidine biosynthetic process"/>
    <property type="evidence" value="ECO:0007669"/>
    <property type="project" value="UniProtKB-UniRule"/>
</dbReference>
<dbReference type="CDD" id="cd13592">
    <property type="entry name" value="PBP2_HisGL2"/>
    <property type="match status" value="1"/>
</dbReference>
<dbReference type="FunFam" id="3.30.70.120:FF:000002">
    <property type="entry name" value="ATP phosphoribosyltransferase"/>
    <property type="match status" value="1"/>
</dbReference>
<dbReference type="FunFam" id="3.40.190.10:FF:000008">
    <property type="entry name" value="ATP phosphoribosyltransferase"/>
    <property type="match status" value="1"/>
</dbReference>
<dbReference type="Gene3D" id="3.30.70.120">
    <property type="match status" value="1"/>
</dbReference>
<dbReference type="Gene3D" id="3.40.190.10">
    <property type="entry name" value="Periplasmic binding protein-like II"/>
    <property type="match status" value="2"/>
</dbReference>
<dbReference type="HAMAP" id="MF_00079">
    <property type="entry name" value="HisG_Long"/>
    <property type="match status" value="1"/>
</dbReference>
<dbReference type="InterPro" id="IPR020621">
    <property type="entry name" value="ATP-PRT_HisG_long"/>
</dbReference>
<dbReference type="InterPro" id="IPR013820">
    <property type="entry name" value="ATP_PRibTrfase_cat"/>
</dbReference>
<dbReference type="InterPro" id="IPR018198">
    <property type="entry name" value="ATP_PRibTrfase_CS"/>
</dbReference>
<dbReference type="InterPro" id="IPR001348">
    <property type="entry name" value="ATP_PRibTrfase_HisG"/>
</dbReference>
<dbReference type="InterPro" id="IPR013115">
    <property type="entry name" value="HisG_C"/>
</dbReference>
<dbReference type="InterPro" id="IPR011322">
    <property type="entry name" value="N-reg_PII-like_a/b"/>
</dbReference>
<dbReference type="InterPro" id="IPR015867">
    <property type="entry name" value="N-reg_PII/ATP_PRibTrfase_C"/>
</dbReference>
<dbReference type="NCBIfam" id="TIGR00070">
    <property type="entry name" value="hisG"/>
    <property type="match status" value="1"/>
</dbReference>
<dbReference type="NCBIfam" id="TIGR03455">
    <property type="entry name" value="HisG_C-term"/>
    <property type="match status" value="1"/>
</dbReference>
<dbReference type="PANTHER" id="PTHR21403:SF8">
    <property type="entry name" value="ATP PHOSPHORIBOSYLTRANSFERASE"/>
    <property type="match status" value="1"/>
</dbReference>
<dbReference type="PANTHER" id="PTHR21403">
    <property type="entry name" value="ATP PHOSPHORIBOSYLTRANSFERASE ATP-PRTASE"/>
    <property type="match status" value="1"/>
</dbReference>
<dbReference type="Pfam" id="PF01634">
    <property type="entry name" value="HisG"/>
    <property type="match status" value="1"/>
</dbReference>
<dbReference type="Pfam" id="PF08029">
    <property type="entry name" value="HisG_C"/>
    <property type="match status" value="1"/>
</dbReference>
<dbReference type="SUPFAM" id="SSF54913">
    <property type="entry name" value="GlnB-like"/>
    <property type="match status" value="1"/>
</dbReference>
<dbReference type="SUPFAM" id="SSF53850">
    <property type="entry name" value="Periplasmic binding protein-like II"/>
    <property type="match status" value="1"/>
</dbReference>
<dbReference type="PROSITE" id="PS01316">
    <property type="entry name" value="ATP_P_PHORIBOSYLTR"/>
    <property type="match status" value="1"/>
</dbReference>
<reference key="1">
    <citation type="journal article" date="2005" name="Nucleic Acids Res.">
        <title>Genome dynamics and diversity of Shigella species, the etiologic agents of bacillary dysentery.</title>
        <authorList>
            <person name="Yang F."/>
            <person name="Yang J."/>
            <person name="Zhang X."/>
            <person name="Chen L."/>
            <person name="Jiang Y."/>
            <person name="Yan Y."/>
            <person name="Tang X."/>
            <person name="Wang J."/>
            <person name="Xiong Z."/>
            <person name="Dong J."/>
            <person name="Xue Y."/>
            <person name="Zhu Y."/>
            <person name="Xu X."/>
            <person name="Sun L."/>
            <person name="Chen S."/>
            <person name="Nie H."/>
            <person name="Peng J."/>
            <person name="Xu J."/>
            <person name="Wang Y."/>
            <person name="Yuan Z."/>
            <person name="Wen Y."/>
            <person name="Yao Z."/>
            <person name="Shen Y."/>
            <person name="Qiang B."/>
            <person name="Hou Y."/>
            <person name="Yu J."/>
            <person name="Jin Q."/>
        </authorList>
    </citation>
    <scope>NUCLEOTIDE SEQUENCE [LARGE SCALE GENOMIC DNA]</scope>
    <source>
        <strain>Sd197</strain>
    </source>
</reference>
<evidence type="ECO:0000255" key="1">
    <source>
        <dbReference type="HAMAP-Rule" id="MF_00079"/>
    </source>
</evidence>